<protein>
    <recommendedName>
        <fullName>Flagellar M-ring protein FliF</fullName>
    </recommendedName>
</protein>
<accession>Q8FUS3</accession>
<accession>G0KEE3</accession>
<reference key="1">
    <citation type="journal article" date="2002" name="Proc. Natl. Acad. Sci. U.S.A.">
        <title>The Brucella suis genome reveals fundamental similarities between animal and plant pathogens and symbionts.</title>
        <authorList>
            <person name="Paulsen I.T."/>
            <person name="Seshadri R."/>
            <person name="Nelson K.E."/>
            <person name="Eisen J.A."/>
            <person name="Heidelberg J.F."/>
            <person name="Read T.D."/>
            <person name="Dodson R.J."/>
            <person name="Umayam L.A."/>
            <person name="Brinkac L.M."/>
            <person name="Beanan M.J."/>
            <person name="Daugherty S.C."/>
            <person name="DeBoy R.T."/>
            <person name="Durkin A.S."/>
            <person name="Kolonay J.F."/>
            <person name="Madupu R."/>
            <person name="Nelson W.C."/>
            <person name="Ayodeji B."/>
            <person name="Kraul M."/>
            <person name="Shetty J."/>
            <person name="Malek J.A."/>
            <person name="Van Aken S.E."/>
            <person name="Riedmuller S."/>
            <person name="Tettelin H."/>
            <person name="Gill S.R."/>
            <person name="White O."/>
            <person name="Salzberg S.L."/>
            <person name="Hoover D.L."/>
            <person name="Lindler L.E."/>
            <person name="Halling S.M."/>
            <person name="Boyle S.M."/>
            <person name="Fraser C.M."/>
        </authorList>
    </citation>
    <scope>NUCLEOTIDE SEQUENCE [LARGE SCALE GENOMIC DNA]</scope>
    <source>
        <strain>1330</strain>
    </source>
</reference>
<reference key="2">
    <citation type="journal article" date="2011" name="J. Bacteriol.">
        <title>Revised genome sequence of Brucella suis 1330.</title>
        <authorList>
            <person name="Tae H."/>
            <person name="Shallom S."/>
            <person name="Settlage R."/>
            <person name="Preston D."/>
            <person name="Adams L.G."/>
            <person name="Garner H.R."/>
        </authorList>
    </citation>
    <scope>NUCLEOTIDE SEQUENCE [LARGE SCALE GENOMIC DNA]</scope>
    <source>
        <strain>1330</strain>
    </source>
</reference>
<gene>
    <name type="primary">fliF</name>
    <name type="ordered locus">BRA1146</name>
    <name type="ordered locus">BS1330_II1137</name>
</gene>
<proteinExistence type="inferred from homology"/>
<evidence type="ECO:0000250" key="1"/>
<evidence type="ECO:0000255" key="2"/>
<evidence type="ECO:0000256" key="3">
    <source>
        <dbReference type="SAM" id="MobiDB-lite"/>
    </source>
</evidence>
<evidence type="ECO:0000305" key="4"/>
<keyword id="KW-0975">Bacterial flagellum</keyword>
<keyword id="KW-0997">Cell inner membrane</keyword>
<keyword id="KW-1003">Cell membrane</keyword>
<keyword id="KW-0472">Membrane</keyword>
<keyword id="KW-0812">Transmembrane</keyword>
<keyword id="KW-1133">Transmembrane helix</keyword>
<feature type="chain" id="PRO_0000180877" description="Flagellar M-ring protein FliF">
    <location>
        <begin position="1"/>
        <end position="580"/>
    </location>
</feature>
<feature type="transmembrane region" description="Helical" evidence="2">
    <location>
        <begin position="29"/>
        <end position="49"/>
    </location>
</feature>
<feature type="transmembrane region" description="Helical" evidence="2">
    <location>
        <begin position="445"/>
        <end position="465"/>
    </location>
</feature>
<feature type="region of interest" description="Disordered" evidence="3">
    <location>
        <begin position="273"/>
        <end position="341"/>
    </location>
</feature>
<feature type="compositionally biased region" description="Basic and acidic residues" evidence="3">
    <location>
        <begin position="274"/>
        <end position="308"/>
    </location>
</feature>
<feature type="compositionally biased region" description="Polar residues" evidence="3">
    <location>
        <begin position="309"/>
        <end position="331"/>
    </location>
</feature>
<feature type="compositionally biased region" description="Basic and acidic residues" evidence="3">
    <location>
        <begin position="332"/>
        <end position="341"/>
    </location>
</feature>
<organism>
    <name type="scientific">Brucella suis biovar 1 (strain 1330)</name>
    <dbReference type="NCBI Taxonomy" id="204722"/>
    <lineage>
        <taxon>Bacteria</taxon>
        <taxon>Pseudomonadati</taxon>
        <taxon>Pseudomonadota</taxon>
        <taxon>Alphaproteobacteria</taxon>
        <taxon>Hyphomicrobiales</taxon>
        <taxon>Brucellaceae</taxon>
        <taxon>Brucella/Ochrobactrum group</taxon>
        <taxon>Brucella</taxon>
    </lineage>
</organism>
<name>FLIF_BRUSU</name>
<dbReference type="EMBL" id="AE014292">
    <property type="protein sequence ID" value="AAN34305.1"/>
    <property type="molecule type" value="Genomic_DNA"/>
</dbReference>
<dbReference type="EMBL" id="CP002998">
    <property type="protein sequence ID" value="AEM20581.1"/>
    <property type="molecule type" value="Genomic_DNA"/>
</dbReference>
<dbReference type="RefSeq" id="WP_002966637.1">
    <property type="nucleotide sequence ID" value="NZ_KN046805.1"/>
</dbReference>
<dbReference type="SMR" id="Q8FUS3"/>
<dbReference type="GeneID" id="93016063"/>
<dbReference type="KEGG" id="bms:BRA1146"/>
<dbReference type="KEGG" id="bsi:BS1330_II1137"/>
<dbReference type="HOGENOM" id="CLU_028108_4_0_5"/>
<dbReference type="PRO" id="PR:Q8FUS3"/>
<dbReference type="Proteomes" id="UP000007104">
    <property type="component" value="Chromosome II"/>
</dbReference>
<dbReference type="GO" id="GO:0009431">
    <property type="term" value="C:bacterial-type flagellum basal body, MS ring"/>
    <property type="evidence" value="ECO:0007669"/>
    <property type="project" value="InterPro"/>
</dbReference>
<dbReference type="GO" id="GO:0005886">
    <property type="term" value="C:plasma membrane"/>
    <property type="evidence" value="ECO:0007669"/>
    <property type="project" value="UniProtKB-SubCell"/>
</dbReference>
<dbReference type="GO" id="GO:0003774">
    <property type="term" value="F:cytoskeletal motor activity"/>
    <property type="evidence" value="ECO:0007669"/>
    <property type="project" value="InterPro"/>
</dbReference>
<dbReference type="GO" id="GO:0071973">
    <property type="term" value="P:bacterial-type flagellum-dependent cell motility"/>
    <property type="evidence" value="ECO:0007669"/>
    <property type="project" value="InterPro"/>
</dbReference>
<dbReference type="Gene3D" id="3.30.300.30">
    <property type="match status" value="1"/>
</dbReference>
<dbReference type="InterPro" id="IPR045851">
    <property type="entry name" value="AMP-bd_C_sf"/>
</dbReference>
<dbReference type="InterPro" id="IPR013556">
    <property type="entry name" value="Flag_M-ring_C"/>
</dbReference>
<dbReference type="InterPro" id="IPR000067">
    <property type="entry name" value="FlgMring_FliF"/>
</dbReference>
<dbReference type="InterPro" id="IPR006182">
    <property type="entry name" value="FliF_N_dom"/>
</dbReference>
<dbReference type="InterPro" id="IPR043427">
    <property type="entry name" value="YscJ/FliF"/>
</dbReference>
<dbReference type="NCBIfam" id="TIGR00206">
    <property type="entry name" value="fliF"/>
    <property type="match status" value="1"/>
</dbReference>
<dbReference type="PANTHER" id="PTHR30046">
    <property type="entry name" value="FLAGELLAR M-RING PROTEIN"/>
    <property type="match status" value="1"/>
</dbReference>
<dbReference type="PANTHER" id="PTHR30046:SF0">
    <property type="entry name" value="FLAGELLAR M-RING PROTEIN"/>
    <property type="match status" value="1"/>
</dbReference>
<dbReference type="Pfam" id="PF01514">
    <property type="entry name" value="YscJ_FliF"/>
    <property type="match status" value="1"/>
</dbReference>
<dbReference type="Pfam" id="PF08345">
    <property type="entry name" value="YscJ_FliF_C"/>
    <property type="match status" value="1"/>
</dbReference>
<dbReference type="PIRSF" id="PIRSF004862">
    <property type="entry name" value="FliF"/>
    <property type="match status" value="1"/>
</dbReference>
<dbReference type="PRINTS" id="PR01009">
    <property type="entry name" value="FLGMRINGFLIF"/>
</dbReference>
<comment type="function">
    <text evidence="1">The M ring may be actively involved in energy transduction.</text>
</comment>
<comment type="subunit">
    <text evidence="1">The basal body constitutes a major portion of the flagellar organelle and consists of five rings (E,L,P,S, and M) mounted on a central rod. The M ring is integral to the inner membrane of the cell and may be connected to the flagellar rod via the S ring. The S (supramembrane ring) lies just distal to the M ring. The L and P rings lie in the outer membrane and the periplasmic space, respectively (By similarity).</text>
</comment>
<comment type="subcellular location">
    <subcellularLocation>
        <location evidence="1">Cell inner membrane</location>
        <topology evidence="1">Multi-pass membrane protein</topology>
    </subcellularLocation>
    <subcellularLocation>
        <location evidence="1">Bacterial flagellum basal body</location>
    </subcellularLocation>
</comment>
<comment type="similarity">
    <text evidence="4">Belongs to the FliF family.</text>
</comment>
<comment type="caution">
    <text evidence="4">Brucella species display species-specific inactivation of flagellar genes and are consequently nonmotile.</text>
</comment>
<sequence>MAVVWMQQNFQQLIEQLKGTLGKLGARKLIALGLVGAALMGAILYTSIYLGRPSYETLYVGLSRDDVNRMGLALGEAGIPFDVKSDGSSILVPIGKAENARMYLAEKGLPTSNNAGYELFDNMGSLGLTSFMQEITRVRALEGEIARTIQAIRGVKAARVHIVLAEKGSFRRGDQKPSASVVIRAEGGFSAESAQSIRQLVAAAVPSLDASSVTVLDTNGHLLASAGEGANGAALMTASLEQQVASHVDDSIRKALAPYLGLGHFQTSVQAALDTDRRQTKETTYDPESRVERSVRVVRESGDSRNNRNDNATGVEQNIPQEQIQNRNGESSTEKTDRREELTNYEVNSKTVSTVSDGYSIKRLSIAVVIDQARLLQTAGTTPPPANFVDQQITKIRDLVATAAGLNTNRGDVINVTAVNFLDPAGADMEPVSAPWTDTLLRQSGSYANALAILAAVGLLIWFGLRPLLRDQNVKPAGTEVAIREAGEVATPNFIGGAESVGEGVQAVIGGPAAYADQMKTSLSDLRQRMRMPAKLRLEQMIEMDEERVAAVLKQWIHETASGREADPAKASAMPELKAA</sequence>